<name>CYB_OCHDE</name>
<gene>
    <name type="primary">MT-CYB</name>
    <name type="synonym">COB</name>
    <name type="synonym">CYTB</name>
    <name type="synonym">MTCYB</name>
</gene>
<sequence>MTNIRKSHPLMKIVNHSLIDLPAPSNISAWWNFGSLLGLCLGIQIVTGLFLAMHYTSDTLTAFSSVTHICRDVNYGWIIRYLHANGASMFFICLFLHVGRGIYYGSYTYSETWNIGILLLFAVMATAFMGYVLPWGQMSFWGATVITNLLSAIPYIGTDLVQWIWGGFSVDKATLTRFFAFHFILPFIIAALVMVHLLFLHETGSNNPTGIISDADKIPFHPYYTIKDALGFLFLITLLLTLVLFSPDLLGDPDNYTPANPLNTPPHIKPEWYFLFAYAILRSIPNKLGGVLALVLSIAILAVMPLLHTSKQRSMMFRPISQCLFWILVADLLTLTWIGGQPVEHPFIIIGQLASFLYFFLILILMPTCSLIENKLLKW</sequence>
<reference key="1">
    <citation type="journal article" date="2000" name="Mol. Phylogenet. Evol.">
        <title>Molecular systematics of pikas (genus Ochotona) inferred from mitochondrial DNA sequences.</title>
        <authorList>
            <person name="Yu N."/>
            <person name="Zheng C."/>
            <person name="Zhang Y.P."/>
            <person name="Li W.H."/>
        </authorList>
    </citation>
    <scope>NUCLEOTIDE SEQUENCE [GENOMIC DNA]</scope>
</reference>
<proteinExistence type="inferred from homology"/>
<comment type="function">
    <text evidence="2">Component of the ubiquinol-cytochrome c reductase complex (complex III or cytochrome b-c1 complex) that is part of the mitochondrial respiratory chain. The b-c1 complex mediates electron transfer from ubiquinol to cytochrome c. Contributes to the generation of a proton gradient across the mitochondrial membrane that is then used for ATP synthesis.</text>
</comment>
<comment type="cofactor">
    <cofactor evidence="2">
        <name>heme b</name>
        <dbReference type="ChEBI" id="CHEBI:60344"/>
    </cofactor>
    <text evidence="2">Binds 2 heme b groups non-covalently.</text>
</comment>
<comment type="subunit">
    <text evidence="2">The cytochrome bc1 complex contains 11 subunits: 3 respiratory subunits (MT-CYB, CYC1 and UQCRFS1), 2 core proteins (UQCRC1 and UQCRC2) and 6 low-molecular weight proteins (UQCRH/QCR6, UQCRB/QCR7, UQCRQ/QCR8, UQCR10/QCR9, UQCR11/QCR10 and a cleavage product of UQCRFS1). This cytochrome bc1 complex then forms a dimer.</text>
</comment>
<comment type="subcellular location">
    <subcellularLocation>
        <location evidence="2">Mitochondrion inner membrane</location>
        <topology evidence="2">Multi-pass membrane protein</topology>
    </subcellularLocation>
</comment>
<comment type="miscellaneous">
    <text evidence="1">Heme 1 (or BL or b562) is low-potential and absorbs at about 562 nm, and heme 2 (or BH or b566) is high-potential and absorbs at about 566 nm.</text>
</comment>
<comment type="similarity">
    <text evidence="3 4">Belongs to the cytochrome b family.</text>
</comment>
<comment type="caution">
    <text evidence="2">The full-length protein contains only eight transmembrane helices, not nine as predicted by bioinformatics tools.</text>
</comment>
<dbReference type="EMBL" id="AF273008">
    <property type="protein sequence ID" value="AAG00203.1"/>
    <property type="molecule type" value="Genomic_DNA"/>
</dbReference>
<dbReference type="SMR" id="Q9G1C4"/>
<dbReference type="GO" id="GO:0005743">
    <property type="term" value="C:mitochondrial inner membrane"/>
    <property type="evidence" value="ECO:0007669"/>
    <property type="project" value="UniProtKB-SubCell"/>
</dbReference>
<dbReference type="GO" id="GO:0045275">
    <property type="term" value="C:respiratory chain complex III"/>
    <property type="evidence" value="ECO:0007669"/>
    <property type="project" value="InterPro"/>
</dbReference>
<dbReference type="GO" id="GO:0046872">
    <property type="term" value="F:metal ion binding"/>
    <property type="evidence" value="ECO:0007669"/>
    <property type="project" value="UniProtKB-KW"/>
</dbReference>
<dbReference type="GO" id="GO:0008121">
    <property type="term" value="F:ubiquinol-cytochrome-c reductase activity"/>
    <property type="evidence" value="ECO:0007669"/>
    <property type="project" value="InterPro"/>
</dbReference>
<dbReference type="GO" id="GO:0006122">
    <property type="term" value="P:mitochondrial electron transport, ubiquinol to cytochrome c"/>
    <property type="evidence" value="ECO:0007669"/>
    <property type="project" value="TreeGrafter"/>
</dbReference>
<dbReference type="CDD" id="cd00290">
    <property type="entry name" value="cytochrome_b_C"/>
    <property type="match status" value="1"/>
</dbReference>
<dbReference type="CDD" id="cd00284">
    <property type="entry name" value="Cytochrome_b_N"/>
    <property type="match status" value="1"/>
</dbReference>
<dbReference type="FunFam" id="1.20.810.10:FF:000002">
    <property type="entry name" value="Cytochrome b"/>
    <property type="match status" value="1"/>
</dbReference>
<dbReference type="Gene3D" id="1.20.810.10">
    <property type="entry name" value="Cytochrome Bc1 Complex, Chain C"/>
    <property type="match status" value="1"/>
</dbReference>
<dbReference type="InterPro" id="IPR005798">
    <property type="entry name" value="Cyt_b/b6_C"/>
</dbReference>
<dbReference type="InterPro" id="IPR036150">
    <property type="entry name" value="Cyt_b/b6_C_sf"/>
</dbReference>
<dbReference type="InterPro" id="IPR005797">
    <property type="entry name" value="Cyt_b/b6_N"/>
</dbReference>
<dbReference type="InterPro" id="IPR027387">
    <property type="entry name" value="Cytb/b6-like_sf"/>
</dbReference>
<dbReference type="InterPro" id="IPR030689">
    <property type="entry name" value="Cytochrome_b"/>
</dbReference>
<dbReference type="InterPro" id="IPR048260">
    <property type="entry name" value="Cytochrome_b_C_euk/bac"/>
</dbReference>
<dbReference type="InterPro" id="IPR048259">
    <property type="entry name" value="Cytochrome_b_N_euk/bac"/>
</dbReference>
<dbReference type="InterPro" id="IPR016174">
    <property type="entry name" value="Di-haem_cyt_TM"/>
</dbReference>
<dbReference type="PANTHER" id="PTHR19271">
    <property type="entry name" value="CYTOCHROME B"/>
    <property type="match status" value="1"/>
</dbReference>
<dbReference type="PANTHER" id="PTHR19271:SF16">
    <property type="entry name" value="CYTOCHROME B"/>
    <property type="match status" value="1"/>
</dbReference>
<dbReference type="Pfam" id="PF00032">
    <property type="entry name" value="Cytochrom_B_C"/>
    <property type="match status" value="1"/>
</dbReference>
<dbReference type="Pfam" id="PF00033">
    <property type="entry name" value="Cytochrome_B"/>
    <property type="match status" value="1"/>
</dbReference>
<dbReference type="PIRSF" id="PIRSF038885">
    <property type="entry name" value="COB"/>
    <property type="match status" value="1"/>
</dbReference>
<dbReference type="SUPFAM" id="SSF81648">
    <property type="entry name" value="a domain/subunit of cytochrome bc1 complex (Ubiquinol-cytochrome c reductase)"/>
    <property type="match status" value="1"/>
</dbReference>
<dbReference type="SUPFAM" id="SSF81342">
    <property type="entry name" value="Transmembrane di-heme cytochromes"/>
    <property type="match status" value="1"/>
</dbReference>
<dbReference type="PROSITE" id="PS51003">
    <property type="entry name" value="CYTB_CTER"/>
    <property type="match status" value="1"/>
</dbReference>
<dbReference type="PROSITE" id="PS51002">
    <property type="entry name" value="CYTB_NTER"/>
    <property type="match status" value="1"/>
</dbReference>
<accession>Q9G1C4</accession>
<feature type="chain" id="PRO_0000254741" description="Cytochrome b">
    <location>
        <begin position="1"/>
        <end position="379"/>
    </location>
</feature>
<feature type="transmembrane region" description="Helical" evidence="2">
    <location>
        <begin position="33"/>
        <end position="53"/>
    </location>
</feature>
<feature type="transmembrane region" description="Helical" evidence="2">
    <location>
        <begin position="77"/>
        <end position="98"/>
    </location>
</feature>
<feature type="transmembrane region" description="Helical" evidence="2">
    <location>
        <begin position="113"/>
        <end position="133"/>
    </location>
</feature>
<feature type="transmembrane region" description="Helical" evidence="2">
    <location>
        <begin position="178"/>
        <end position="198"/>
    </location>
</feature>
<feature type="transmembrane region" description="Helical" evidence="2">
    <location>
        <begin position="226"/>
        <end position="246"/>
    </location>
</feature>
<feature type="transmembrane region" description="Helical" evidence="2">
    <location>
        <begin position="288"/>
        <end position="308"/>
    </location>
</feature>
<feature type="transmembrane region" description="Helical" evidence="2">
    <location>
        <begin position="320"/>
        <end position="340"/>
    </location>
</feature>
<feature type="transmembrane region" description="Helical" evidence="2">
    <location>
        <begin position="347"/>
        <end position="367"/>
    </location>
</feature>
<feature type="binding site" description="axial binding residue" evidence="2">
    <location>
        <position position="83"/>
    </location>
    <ligand>
        <name>heme b</name>
        <dbReference type="ChEBI" id="CHEBI:60344"/>
        <label>b562</label>
    </ligand>
    <ligandPart>
        <name>Fe</name>
        <dbReference type="ChEBI" id="CHEBI:18248"/>
    </ligandPart>
</feature>
<feature type="binding site" description="axial binding residue" evidence="2">
    <location>
        <position position="97"/>
    </location>
    <ligand>
        <name>heme b</name>
        <dbReference type="ChEBI" id="CHEBI:60344"/>
        <label>b566</label>
    </ligand>
    <ligandPart>
        <name>Fe</name>
        <dbReference type="ChEBI" id="CHEBI:18248"/>
    </ligandPart>
</feature>
<feature type="binding site" description="axial binding residue" evidence="2">
    <location>
        <position position="182"/>
    </location>
    <ligand>
        <name>heme b</name>
        <dbReference type="ChEBI" id="CHEBI:60344"/>
        <label>b562</label>
    </ligand>
    <ligandPart>
        <name>Fe</name>
        <dbReference type="ChEBI" id="CHEBI:18248"/>
    </ligandPart>
</feature>
<feature type="binding site" description="axial binding residue" evidence="2">
    <location>
        <position position="196"/>
    </location>
    <ligand>
        <name>heme b</name>
        <dbReference type="ChEBI" id="CHEBI:60344"/>
        <label>b566</label>
    </ligand>
    <ligandPart>
        <name>Fe</name>
        <dbReference type="ChEBI" id="CHEBI:18248"/>
    </ligandPart>
</feature>
<feature type="binding site" evidence="2">
    <location>
        <position position="201"/>
    </location>
    <ligand>
        <name>a ubiquinone</name>
        <dbReference type="ChEBI" id="CHEBI:16389"/>
    </ligand>
</feature>
<evidence type="ECO:0000250" key="1"/>
<evidence type="ECO:0000250" key="2">
    <source>
        <dbReference type="UniProtKB" id="P00157"/>
    </source>
</evidence>
<evidence type="ECO:0000255" key="3">
    <source>
        <dbReference type="PROSITE-ProRule" id="PRU00967"/>
    </source>
</evidence>
<evidence type="ECO:0000255" key="4">
    <source>
        <dbReference type="PROSITE-ProRule" id="PRU00968"/>
    </source>
</evidence>
<geneLocation type="mitochondrion"/>
<keyword id="KW-0249">Electron transport</keyword>
<keyword id="KW-0349">Heme</keyword>
<keyword id="KW-0408">Iron</keyword>
<keyword id="KW-0472">Membrane</keyword>
<keyword id="KW-0479">Metal-binding</keyword>
<keyword id="KW-0496">Mitochondrion</keyword>
<keyword id="KW-0999">Mitochondrion inner membrane</keyword>
<keyword id="KW-0679">Respiratory chain</keyword>
<keyword id="KW-0812">Transmembrane</keyword>
<keyword id="KW-1133">Transmembrane helix</keyword>
<keyword id="KW-0813">Transport</keyword>
<keyword id="KW-0830">Ubiquinone</keyword>
<organism>
    <name type="scientific">Ochotona dauurica annectens</name>
    <name type="common">Daurian pika</name>
    <name type="synonym">Ochotona annectens</name>
    <dbReference type="NCBI Taxonomy" id="130820"/>
    <lineage>
        <taxon>Eukaryota</taxon>
        <taxon>Metazoa</taxon>
        <taxon>Chordata</taxon>
        <taxon>Craniata</taxon>
        <taxon>Vertebrata</taxon>
        <taxon>Euteleostomi</taxon>
        <taxon>Mammalia</taxon>
        <taxon>Eutheria</taxon>
        <taxon>Euarchontoglires</taxon>
        <taxon>Glires</taxon>
        <taxon>Lagomorpha</taxon>
        <taxon>Ochotonidae</taxon>
        <taxon>Ochotona</taxon>
    </lineage>
</organism>
<protein>
    <recommendedName>
        <fullName>Cytochrome b</fullName>
    </recommendedName>
    <alternativeName>
        <fullName>Complex III subunit 3</fullName>
    </alternativeName>
    <alternativeName>
        <fullName>Complex III subunit III</fullName>
    </alternativeName>
    <alternativeName>
        <fullName>Cytochrome b-c1 complex subunit 3</fullName>
    </alternativeName>
    <alternativeName>
        <fullName>Ubiquinol-cytochrome-c reductase complex cytochrome b subunit</fullName>
    </alternativeName>
</protein>